<protein>
    <recommendedName>
        <fullName evidence="12">Potassium voltage-gated channel subfamily E member 4</fullName>
    </recommendedName>
    <alternativeName>
        <fullName>MinK-related peptide 3</fullName>
        <shortName evidence="10">MiRP3</shortName>
    </alternativeName>
    <alternativeName>
        <fullName>Minimum potassium ion channel-related peptide 3</fullName>
    </alternativeName>
    <alternativeName>
        <fullName>Potassium channel subunit beta MiRP3</fullName>
    </alternativeName>
</protein>
<keyword id="KW-0024">Alternative initiation</keyword>
<keyword id="KW-0325">Glycoprotein</keyword>
<keyword id="KW-0407">Ion channel</keyword>
<keyword id="KW-0406">Ion transport</keyword>
<keyword id="KW-0472">Membrane</keyword>
<keyword id="KW-0630">Potassium</keyword>
<keyword id="KW-0631">Potassium channel</keyword>
<keyword id="KW-0633">Potassium transport</keyword>
<keyword id="KW-1267">Proteomics identification</keyword>
<keyword id="KW-1185">Reference proteome</keyword>
<keyword id="KW-0812">Transmembrane</keyword>
<keyword id="KW-1133">Transmembrane helix</keyword>
<keyword id="KW-0813">Transport</keyword>
<keyword id="KW-0851">Voltage-gated channel</keyword>
<accession>Q8WWG9</accession>
<accession>A5H1P5</accession>
<accession>B7Z275</accession>
<accession>Q53SM4</accession>
<accession>Q96CC4</accession>
<sequence>MHFLTIYPNCSSGVVRAQSRTEQKNPLGLDDLGIQNLGQTVSLAPAVEAASMLKMEPLNSTHPGTAASSSPLESRAAGGGSGNGNEYFYILVVMSFYGIFLIGIMLGYMKSKRREKKSSLLLLYKDEERLWGEAMKPLPVVSGLRSVQVPLMLNMLQESVAPALSCTLCSMEGDSVSSESSSPDVHLTIQEEGADDELEETSETPLNESSEGSSENIHQNS</sequence>
<proteinExistence type="evidence at protein level"/>
<comment type="function">
    <text evidence="4 6 7 8">Ancillary protein that functions as a regulatory subunit of the voltage-gated potassium (Kv) channel complex composed of pore-forming and potassium-conducting alpha subunits and of regulatory beta subunits. KCNE4 beta subunit modulates the gating kinetics and enhances stability of the channel complex (PubMed:12096056, PubMed:19687231, PubMed:20533308, PubMed:27162025). Associates with KCNQ1/KVLTQ1 alpha subunit to inhibit potassium currents (PubMed:12096056, PubMed:19687231, PubMed:20533308, PubMed:27162025).</text>
</comment>
<comment type="function">
    <molecule>Isoform 2</molecule>
    <text evidence="8">May inhibit KCNQ4-mediated potassium currents.</text>
</comment>
<comment type="subunit">
    <text evidence="1 4 6 7">Forms heterooligomers with KCNA3, inhibiting its activity by impairing localization to the cell membrane. The stoichiometry of KCNA3 and KCNE4 in the heterooligomers are 4:1, 4:2, 4:3 or 4:4 respectively. Increasing the number of KCNE4 subunits steadily slows the activation KCNA3 and decreases its abundance at the cell membrane. However, a single subunit of KCNE4 is sufficient for the cooperative enhancement of the inactivating function of the channel. However, a single subunit of KCNE4 is sufficient for the cooperative enhancement of the inactivating function of the channel (By similarity). Interacts with KCNQ1; impairs KCNQ1 localization in lipid rafts and inhibits voltage-gated potassium channel activity.</text>
</comment>
<comment type="interaction">
    <interactant intactId="EBI-11750916">
        <id>Q8WWG9</id>
    </interactant>
    <interactant intactId="EBI-1748958">
        <id>P49069</id>
        <label>CAMLG</label>
    </interactant>
    <organismsDiffer>false</organismsDiffer>
    <experiments>3</experiments>
</comment>
<comment type="interaction">
    <interactant intactId="EBI-11750916">
        <id>Q8WWG9</id>
    </interactant>
    <interactant intactId="EBI-2515857">
        <id>O43681</id>
        <label>GET3</label>
    </interactant>
    <organismsDiffer>false</organismsDiffer>
    <experiments>3</experiments>
</comment>
<comment type="interaction">
    <interactant intactId="EBI-11750916">
        <id>Q8WWG9</id>
    </interactant>
    <interactant intactId="EBI-17257686">
        <id>Q13061-2</id>
        <label>TRDN</label>
    </interactant>
    <organismsDiffer>false</organismsDiffer>
    <experiments>3</experiments>
</comment>
<comment type="subcellular location">
    <subcellularLocation>
        <location evidence="13">Membrane</location>
        <topology evidence="2">Single-pass membrane protein</topology>
    </subcellularLocation>
</comment>
<comment type="alternative products">
    <event type="alternative initiation"/>
    <isoform>
        <id>Q8WWG9-1</id>
        <name>1</name>
        <name evidence="11">hKCNE4L</name>
        <sequence type="displayed"/>
    </isoform>
    <isoform>
        <id>Q8WWG9-3</id>
        <name>2</name>
        <name evidence="11">hKCNE4S</name>
        <sequence type="described" ref="VSP_062167"/>
    </isoform>
</comment>
<comment type="tissue specificity">
    <text evidence="4">Predominantly expressed in embryo and adult uterus. Low expression found in kidney, small intestine, lung and heart.</text>
</comment>
<comment type="tissue specificity">
    <molecule>Isoform 1</molecule>
    <text evidence="8">Detected in kidney, thymus, and uterus (at protein level).</text>
</comment>
<comment type="similarity">
    <text evidence="12">Belongs to the potassium channel KCNE family.</text>
</comment>
<comment type="sequence caution" evidence="12">
    <conflict type="erroneous initiation">
        <sequence resource="EMBL-CDS" id="AAH14429"/>
    </conflict>
    <text>Truncated N-terminus.</text>
</comment>
<comment type="sequence caution" evidence="12">
    <conflict type="erroneous initiation">
        <sequence resource="EMBL-CDS" id="AAL49979"/>
    </conflict>
    <text>Truncated N-terminus.</text>
</comment>
<dbReference type="EMBL" id="DQ784806">
    <property type="protein sequence ID" value="ABQ01241.1"/>
    <property type="molecule type" value="Genomic_DNA"/>
</dbReference>
<dbReference type="EMBL" id="AK294423">
    <property type="protein sequence ID" value="BAH11761.1"/>
    <property type="molecule type" value="mRNA"/>
</dbReference>
<dbReference type="EMBL" id="AK313203">
    <property type="protein sequence ID" value="BAG36019.1"/>
    <property type="molecule type" value="mRNA"/>
</dbReference>
<dbReference type="EMBL" id="AC017014">
    <property type="protein sequence ID" value="AAX93228.1"/>
    <property type="molecule type" value="Genomic_DNA"/>
</dbReference>
<dbReference type="EMBL" id="CH471063">
    <property type="protein sequence ID" value="EAW70810.1"/>
    <property type="molecule type" value="Genomic_DNA"/>
</dbReference>
<dbReference type="EMBL" id="BC014429">
    <property type="protein sequence ID" value="AAH14429.1"/>
    <property type="status" value="ALT_INIT"/>
    <property type="molecule type" value="mRNA"/>
</dbReference>
<dbReference type="EMBL" id="AY065987">
    <property type="protein sequence ID" value="AAL49979.1"/>
    <property type="status" value="ALT_INIT"/>
    <property type="molecule type" value="mRNA"/>
</dbReference>
<dbReference type="CCDS" id="CCDS2456.3">
    <molecule id="Q8WWG9-3"/>
</dbReference>
<dbReference type="RefSeq" id="NP_542402.4">
    <molecule id="Q8WWG9-3"/>
    <property type="nucleotide sequence ID" value="NM_080671.4"/>
</dbReference>
<dbReference type="SMR" id="Q8WWG9"/>
<dbReference type="BioGRID" id="117217">
    <property type="interactions" value="43"/>
</dbReference>
<dbReference type="CORUM" id="Q8WWG9"/>
<dbReference type="FunCoup" id="Q8WWG9">
    <property type="interactions" value="6"/>
</dbReference>
<dbReference type="IntAct" id="Q8WWG9">
    <property type="interactions" value="29"/>
</dbReference>
<dbReference type="STRING" id="9606.ENSP00000281830"/>
<dbReference type="DrugBank" id="DB00228">
    <property type="generic name" value="Enflurane"/>
</dbReference>
<dbReference type="DrugBank" id="DB01110">
    <property type="generic name" value="Miconazole"/>
</dbReference>
<dbReference type="DrugBank" id="DB01069">
    <property type="generic name" value="Promethazine"/>
</dbReference>
<dbReference type="GlyCosmos" id="Q8WWG9">
    <property type="glycosylation" value="1 site, No reported glycans"/>
</dbReference>
<dbReference type="GlyGen" id="Q8WWG9">
    <property type="glycosylation" value="2 sites, 2 N-linked glycans (1 site)"/>
</dbReference>
<dbReference type="iPTMnet" id="Q8WWG9"/>
<dbReference type="PhosphoSitePlus" id="Q8WWG9"/>
<dbReference type="BioMuta" id="KCNE4"/>
<dbReference type="DMDM" id="311033433"/>
<dbReference type="MassIVE" id="Q8WWG9"/>
<dbReference type="PaxDb" id="9606-ENSP00000281830"/>
<dbReference type="PeptideAtlas" id="Q8WWG9"/>
<dbReference type="ProteomicsDB" id="74885"/>
<dbReference type="Antibodypedia" id="2515">
    <property type="antibodies" value="136 antibodies from 26 providers"/>
</dbReference>
<dbReference type="DNASU" id="23704"/>
<dbReference type="Ensembl" id="ENST00000281830.4">
    <molecule id="Q8WWG9-3"/>
    <property type="protein sequence ID" value="ENSP00000281830.5"/>
    <property type="gene ID" value="ENSG00000152049.7"/>
</dbReference>
<dbReference type="GeneID" id="23704"/>
<dbReference type="KEGG" id="hsa:23704"/>
<dbReference type="MANE-Select" id="ENST00000281830.4">
    <molecule id="Q8WWG9-3"/>
    <property type="protein sequence ID" value="ENSP00000281830.5"/>
    <property type="RefSeq nucleotide sequence ID" value="NM_080671.4"/>
    <property type="RefSeq protein sequence ID" value="NP_542402.4"/>
</dbReference>
<dbReference type="UCSC" id="uc002vnl.7">
    <molecule id="Q8WWG9-1"/>
    <property type="organism name" value="human"/>
</dbReference>
<dbReference type="AGR" id="HGNC:6244"/>
<dbReference type="CTD" id="23704"/>
<dbReference type="DisGeNET" id="23704"/>
<dbReference type="GeneCards" id="KCNE4"/>
<dbReference type="HGNC" id="HGNC:6244">
    <property type="gene designation" value="KCNE4"/>
</dbReference>
<dbReference type="HPA" id="ENSG00000152049">
    <property type="expression patterns" value="Tissue enhanced (smooth)"/>
</dbReference>
<dbReference type="MIM" id="607775">
    <property type="type" value="gene"/>
</dbReference>
<dbReference type="neXtProt" id="NX_Q8WWG9"/>
<dbReference type="OpenTargets" id="ENSG00000152049"/>
<dbReference type="PharmGKB" id="PA30032"/>
<dbReference type="VEuPathDB" id="HostDB:ENSG00000152049"/>
<dbReference type="eggNOG" id="ENOG502RZ36">
    <property type="taxonomic scope" value="Eukaryota"/>
</dbReference>
<dbReference type="GeneTree" id="ENSGT00390000013776"/>
<dbReference type="HOGENOM" id="CLU_109412_0_0_1"/>
<dbReference type="InParanoid" id="Q8WWG9"/>
<dbReference type="OMA" id="SPDVHFT"/>
<dbReference type="OrthoDB" id="6422957at2759"/>
<dbReference type="PAN-GO" id="Q8WWG9">
    <property type="GO annotations" value="10 GO annotations based on evolutionary models"/>
</dbReference>
<dbReference type="TreeFam" id="TF333025"/>
<dbReference type="PathwayCommons" id="Q8WWG9"/>
<dbReference type="Reactome" id="R-HSA-5576890">
    <property type="pathway name" value="Phase 3 - rapid repolarisation"/>
</dbReference>
<dbReference type="Reactome" id="R-HSA-5576893">
    <property type="pathway name" value="Phase 2 - plateau phase"/>
</dbReference>
<dbReference type="SignaLink" id="Q8WWG9"/>
<dbReference type="BioGRID-ORCS" id="23704">
    <property type="hits" value="7 hits in 1003 CRISPR screens"/>
</dbReference>
<dbReference type="GeneWiki" id="KCNE4"/>
<dbReference type="GenomeRNAi" id="23704"/>
<dbReference type="Pharos" id="Q8WWG9">
    <property type="development level" value="Tbio"/>
</dbReference>
<dbReference type="PRO" id="PR:Q8WWG9"/>
<dbReference type="Proteomes" id="UP000005640">
    <property type="component" value="Chromosome 2"/>
</dbReference>
<dbReference type="RNAct" id="Q8WWG9">
    <property type="molecule type" value="protein"/>
</dbReference>
<dbReference type="Bgee" id="ENSG00000152049">
    <property type="expression patterns" value="Expressed in saphenous vein and 132 other cell types or tissues"/>
</dbReference>
<dbReference type="GO" id="GO:0016324">
    <property type="term" value="C:apical plasma membrane"/>
    <property type="evidence" value="ECO:0007669"/>
    <property type="project" value="Ensembl"/>
</dbReference>
<dbReference type="GO" id="GO:0008076">
    <property type="term" value="C:voltage-gated potassium channel complex"/>
    <property type="evidence" value="ECO:0000318"/>
    <property type="project" value="GO_Central"/>
</dbReference>
<dbReference type="GO" id="GO:0019870">
    <property type="term" value="F:potassium channel inhibitor activity"/>
    <property type="evidence" value="ECO:0000314"/>
    <property type="project" value="UniProtKB"/>
</dbReference>
<dbReference type="GO" id="GO:0015459">
    <property type="term" value="F:potassium channel regulator activity"/>
    <property type="evidence" value="ECO:0000318"/>
    <property type="project" value="GO_Central"/>
</dbReference>
<dbReference type="GO" id="GO:0044325">
    <property type="term" value="F:transmembrane transporter binding"/>
    <property type="evidence" value="ECO:0000353"/>
    <property type="project" value="UniProtKB"/>
</dbReference>
<dbReference type="GO" id="GO:0005249">
    <property type="term" value="F:voltage-gated potassium channel activity"/>
    <property type="evidence" value="ECO:0007669"/>
    <property type="project" value="InterPro"/>
</dbReference>
<dbReference type="GO" id="GO:0086011">
    <property type="term" value="P:membrane repolarization during action potential"/>
    <property type="evidence" value="ECO:0000318"/>
    <property type="project" value="GO_Central"/>
</dbReference>
<dbReference type="GO" id="GO:0098915">
    <property type="term" value="P:membrane repolarization during ventricular cardiac muscle cell action potential"/>
    <property type="evidence" value="ECO:0007669"/>
    <property type="project" value="GOC"/>
</dbReference>
<dbReference type="GO" id="GO:0097623">
    <property type="term" value="P:potassium ion export across plasma membrane"/>
    <property type="evidence" value="ECO:0000318"/>
    <property type="project" value="GO_Central"/>
</dbReference>
<dbReference type="GO" id="GO:0086091">
    <property type="term" value="P:regulation of heart rate by cardiac conduction"/>
    <property type="evidence" value="ECO:0000318"/>
    <property type="project" value="GO_Central"/>
</dbReference>
<dbReference type="GO" id="GO:0060307">
    <property type="term" value="P:regulation of ventricular cardiac muscle cell membrane repolarization"/>
    <property type="evidence" value="ECO:0000318"/>
    <property type="project" value="GO_Central"/>
</dbReference>
<dbReference type="GO" id="GO:0086005">
    <property type="term" value="P:ventricular cardiac muscle cell action potential"/>
    <property type="evidence" value="ECO:0000318"/>
    <property type="project" value="GO_Central"/>
</dbReference>
<dbReference type="InterPro" id="IPR000369">
    <property type="entry name" value="K_chnl_KCNE"/>
</dbReference>
<dbReference type="PANTHER" id="PTHR15282">
    <property type="entry name" value="POTASSIUM VOLTAGE-GATED CHANNEL SUBFAMILY E MEMBER 1, 3"/>
    <property type="match status" value="1"/>
</dbReference>
<dbReference type="PANTHER" id="PTHR15282:SF9">
    <property type="entry name" value="POTASSIUM VOLTAGE-GATED CHANNEL SUBFAMILY E MEMBER 4"/>
    <property type="match status" value="1"/>
</dbReference>
<dbReference type="Pfam" id="PF02060">
    <property type="entry name" value="ISK_Channel"/>
    <property type="match status" value="1"/>
</dbReference>
<dbReference type="PRINTS" id="PR00168">
    <property type="entry name" value="KCNECHANNEL"/>
</dbReference>
<evidence type="ECO:0000250" key="1">
    <source>
        <dbReference type="UniProtKB" id="Q9WTW3"/>
    </source>
</evidence>
<evidence type="ECO:0000255" key="2"/>
<evidence type="ECO:0000256" key="3">
    <source>
        <dbReference type="SAM" id="MobiDB-lite"/>
    </source>
</evidence>
<evidence type="ECO:0000269" key="4">
    <source>
    </source>
</evidence>
<evidence type="ECO:0000269" key="5">
    <source>
    </source>
</evidence>
<evidence type="ECO:0000269" key="6">
    <source>
    </source>
</evidence>
<evidence type="ECO:0000269" key="7">
    <source>
    </source>
</evidence>
<evidence type="ECO:0000269" key="8">
    <source>
    </source>
</evidence>
<evidence type="ECO:0000269" key="9">
    <source ref="6"/>
</evidence>
<evidence type="ECO:0000303" key="10">
    <source>
    </source>
</evidence>
<evidence type="ECO:0000303" key="11">
    <source>
    </source>
</evidence>
<evidence type="ECO:0000305" key="12"/>
<evidence type="ECO:0000305" key="13">
    <source>
    </source>
</evidence>
<evidence type="ECO:0000312" key="14">
    <source>
        <dbReference type="HGNC" id="HGNC:6244"/>
    </source>
</evidence>
<reference key="1">
    <citation type="submission" date="2006-06" db="EMBL/GenBank/DDBJ databases">
        <authorList>
            <person name="Stockwell T.B."/>
            <person name="Busam D.A."/>
            <person name="Ferriera S.M."/>
            <person name="Brownley A.N."/>
            <person name="Strausberg R.L."/>
            <person name="Kirkness E.F."/>
            <person name="Rogers Y.-H."/>
            <person name="Levy S."/>
        </authorList>
    </citation>
    <scope>NUCLEOTIDE SEQUENCE [MRNA] (ISOFORM 1)</scope>
</reference>
<reference key="2">
    <citation type="journal article" date="2004" name="Nat. Genet.">
        <title>Complete sequencing and characterization of 21,243 full-length human cDNAs.</title>
        <authorList>
            <person name="Ota T."/>
            <person name="Suzuki Y."/>
            <person name="Nishikawa T."/>
            <person name="Otsuki T."/>
            <person name="Sugiyama T."/>
            <person name="Irie R."/>
            <person name="Wakamatsu A."/>
            <person name="Hayashi K."/>
            <person name="Sato H."/>
            <person name="Nagai K."/>
            <person name="Kimura K."/>
            <person name="Makita H."/>
            <person name="Sekine M."/>
            <person name="Obayashi M."/>
            <person name="Nishi T."/>
            <person name="Shibahara T."/>
            <person name="Tanaka T."/>
            <person name="Ishii S."/>
            <person name="Yamamoto J."/>
            <person name="Saito K."/>
            <person name="Kawai Y."/>
            <person name="Isono Y."/>
            <person name="Nakamura Y."/>
            <person name="Nagahari K."/>
            <person name="Murakami K."/>
            <person name="Yasuda T."/>
            <person name="Iwayanagi T."/>
            <person name="Wagatsuma M."/>
            <person name="Shiratori A."/>
            <person name="Sudo H."/>
            <person name="Hosoiri T."/>
            <person name="Kaku Y."/>
            <person name="Kodaira H."/>
            <person name="Kondo H."/>
            <person name="Sugawara M."/>
            <person name="Takahashi M."/>
            <person name="Kanda K."/>
            <person name="Yokoi T."/>
            <person name="Furuya T."/>
            <person name="Kikkawa E."/>
            <person name="Omura Y."/>
            <person name="Abe K."/>
            <person name="Kamihara K."/>
            <person name="Katsuta N."/>
            <person name="Sato K."/>
            <person name="Tanikawa M."/>
            <person name="Yamazaki M."/>
            <person name="Ninomiya K."/>
            <person name="Ishibashi T."/>
            <person name="Yamashita H."/>
            <person name="Murakawa K."/>
            <person name="Fujimori K."/>
            <person name="Tanai H."/>
            <person name="Kimata M."/>
            <person name="Watanabe M."/>
            <person name="Hiraoka S."/>
            <person name="Chiba Y."/>
            <person name="Ishida S."/>
            <person name="Ono Y."/>
            <person name="Takiguchi S."/>
            <person name="Watanabe S."/>
            <person name="Yosida M."/>
            <person name="Hotuta T."/>
            <person name="Kusano J."/>
            <person name="Kanehori K."/>
            <person name="Takahashi-Fujii A."/>
            <person name="Hara H."/>
            <person name="Tanase T.-O."/>
            <person name="Nomura Y."/>
            <person name="Togiya S."/>
            <person name="Komai F."/>
            <person name="Hara R."/>
            <person name="Takeuchi K."/>
            <person name="Arita M."/>
            <person name="Imose N."/>
            <person name="Musashino K."/>
            <person name="Yuuki H."/>
            <person name="Oshima A."/>
            <person name="Sasaki N."/>
            <person name="Aotsuka S."/>
            <person name="Yoshikawa Y."/>
            <person name="Matsunawa H."/>
            <person name="Ichihara T."/>
            <person name="Shiohata N."/>
            <person name="Sano S."/>
            <person name="Moriya S."/>
            <person name="Momiyama H."/>
            <person name="Satoh N."/>
            <person name="Takami S."/>
            <person name="Terashima Y."/>
            <person name="Suzuki O."/>
            <person name="Nakagawa S."/>
            <person name="Senoh A."/>
            <person name="Mizoguchi H."/>
            <person name="Goto Y."/>
            <person name="Shimizu F."/>
            <person name="Wakebe H."/>
            <person name="Hishigaki H."/>
            <person name="Watanabe T."/>
            <person name="Sugiyama A."/>
            <person name="Takemoto M."/>
            <person name="Kawakami B."/>
            <person name="Yamazaki M."/>
            <person name="Watanabe K."/>
            <person name="Kumagai A."/>
            <person name="Itakura S."/>
            <person name="Fukuzumi Y."/>
            <person name="Fujimori Y."/>
            <person name="Komiyama M."/>
            <person name="Tashiro H."/>
            <person name="Tanigami A."/>
            <person name="Fujiwara T."/>
            <person name="Ono T."/>
            <person name="Yamada K."/>
            <person name="Fujii Y."/>
            <person name="Ozaki K."/>
            <person name="Hirao M."/>
            <person name="Ohmori Y."/>
            <person name="Kawabata A."/>
            <person name="Hikiji T."/>
            <person name="Kobatake N."/>
            <person name="Inagaki H."/>
            <person name="Ikema Y."/>
            <person name="Okamoto S."/>
            <person name="Okitani R."/>
            <person name="Kawakami T."/>
            <person name="Noguchi S."/>
            <person name="Itoh T."/>
            <person name="Shigeta K."/>
            <person name="Senba T."/>
            <person name="Matsumura K."/>
            <person name="Nakajima Y."/>
            <person name="Mizuno T."/>
            <person name="Morinaga M."/>
            <person name="Sasaki M."/>
            <person name="Togashi T."/>
            <person name="Oyama M."/>
            <person name="Hata H."/>
            <person name="Watanabe M."/>
            <person name="Komatsu T."/>
            <person name="Mizushima-Sugano J."/>
            <person name="Satoh T."/>
            <person name="Shirai Y."/>
            <person name="Takahashi Y."/>
            <person name="Nakagawa K."/>
            <person name="Okumura K."/>
            <person name="Nagase T."/>
            <person name="Nomura N."/>
            <person name="Kikuchi H."/>
            <person name="Masuho Y."/>
            <person name="Yamashita R."/>
            <person name="Nakai K."/>
            <person name="Yada T."/>
            <person name="Nakamura Y."/>
            <person name="Ohara O."/>
            <person name="Isogai T."/>
            <person name="Sugano S."/>
        </authorList>
    </citation>
    <scope>NUCLEOTIDE SEQUENCE [LARGE SCALE MRNA] (ISOFORMS 1 AND 2)</scope>
    <source>
        <tissue>Amygdala</tissue>
    </source>
</reference>
<reference key="3">
    <citation type="journal article" date="2005" name="Nature">
        <title>Generation and annotation of the DNA sequences of human chromosomes 2 and 4.</title>
        <authorList>
            <person name="Hillier L.W."/>
            <person name="Graves T.A."/>
            <person name="Fulton R.S."/>
            <person name="Fulton L.A."/>
            <person name="Pepin K.H."/>
            <person name="Minx P."/>
            <person name="Wagner-McPherson C."/>
            <person name="Layman D."/>
            <person name="Wylie K."/>
            <person name="Sekhon M."/>
            <person name="Becker M.C."/>
            <person name="Fewell G.A."/>
            <person name="Delehaunty K.D."/>
            <person name="Miner T.L."/>
            <person name="Nash W.E."/>
            <person name="Kremitzki C."/>
            <person name="Oddy L."/>
            <person name="Du H."/>
            <person name="Sun H."/>
            <person name="Bradshaw-Cordum H."/>
            <person name="Ali J."/>
            <person name="Carter J."/>
            <person name="Cordes M."/>
            <person name="Harris A."/>
            <person name="Isak A."/>
            <person name="van Brunt A."/>
            <person name="Nguyen C."/>
            <person name="Du F."/>
            <person name="Courtney L."/>
            <person name="Kalicki J."/>
            <person name="Ozersky P."/>
            <person name="Abbott S."/>
            <person name="Armstrong J."/>
            <person name="Belter E.A."/>
            <person name="Caruso L."/>
            <person name="Cedroni M."/>
            <person name="Cotton M."/>
            <person name="Davidson T."/>
            <person name="Desai A."/>
            <person name="Elliott G."/>
            <person name="Erb T."/>
            <person name="Fronick C."/>
            <person name="Gaige T."/>
            <person name="Haakenson W."/>
            <person name="Haglund K."/>
            <person name="Holmes A."/>
            <person name="Harkins R."/>
            <person name="Kim K."/>
            <person name="Kruchowski S.S."/>
            <person name="Strong C.M."/>
            <person name="Grewal N."/>
            <person name="Goyea E."/>
            <person name="Hou S."/>
            <person name="Levy A."/>
            <person name="Martinka S."/>
            <person name="Mead K."/>
            <person name="McLellan M.D."/>
            <person name="Meyer R."/>
            <person name="Randall-Maher J."/>
            <person name="Tomlinson C."/>
            <person name="Dauphin-Kohlberg S."/>
            <person name="Kozlowicz-Reilly A."/>
            <person name="Shah N."/>
            <person name="Swearengen-Shahid S."/>
            <person name="Snider J."/>
            <person name="Strong J.T."/>
            <person name="Thompson J."/>
            <person name="Yoakum M."/>
            <person name="Leonard S."/>
            <person name="Pearman C."/>
            <person name="Trani L."/>
            <person name="Radionenko M."/>
            <person name="Waligorski J.E."/>
            <person name="Wang C."/>
            <person name="Rock S.M."/>
            <person name="Tin-Wollam A.-M."/>
            <person name="Maupin R."/>
            <person name="Latreille P."/>
            <person name="Wendl M.C."/>
            <person name="Yang S.-P."/>
            <person name="Pohl C."/>
            <person name="Wallis J.W."/>
            <person name="Spieth J."/>
            <person name="Bieri T.A."/>
            <person name="Berkowicz N."/>
            <person name="Nelson J.O."/>
            <person name="Osborne J."/>
            <person name="Ding L."/>
            <person name="Meyer R."/>
            <person name="Sabo A."/>
            <person name="Shotland Y."/>
            <person name="Sinha P."/>
            <person name="Wohldmann P.E."/>
            <person name="Cook L.L."/>
            <person name="Hickenbotham M.T."/>
            <person name="Eldred J."/>
            <person name="Williams D."/>
            <person name="Jones T.A."/>
            <person name="She X."/>
            <person name="Ciccarelli F.D."/>
            <person name="Izaurralde E."/>
            <person name="Taylor J."/>
            <person name="Schmutz J."/>
            <person name="Myers R.M."/>
            <person name="Cox D.R."/>
            <person name="Huang X."/>
            <person name="McPherson J.D."/>
            <person name="Mardis E.R."/>
            <person name="Clifton S.W."/>
            <person name="Warren W.C."/>
            <person name="Chinwalla A.T."/>
            <person name="Eddy S.R."/>
            <person name="Marra M.A."/>
            <person name="Ovcharenko I."/>
            <person name="Furey T.S."/>
            <person name="Miller W."/>
            <person name="Eichler E.E."/>
            <person name="Bork P."/>
            <person name="Suyama M."/>
            <person name="Torrents D."/>
            <person name="Waterston R.H."/>
            <person name="Wilson R.K."/>
        </authorList>
    </citation>
    <scope>NUCLEOTIDE SEQUENCE [LARGE SCALE GENOMIC DNA]</scope>
</reference>
<reference key="4">
    <citation type="submission" date="2005-07" db="EMBL/GenBank/DDBJ databases">
        <authorList>
            <person name="Mural R.J."/>
            <person name="Istrail S."/>
            <person name="Sutton G.G."/>
            <person name="Florea L."/>
            <person name="Halpern A.L."/>
            <person name="Mobarry C.M."/>
            <person name="Lippert R."/>
            <person name="Walenz B."/>
            <person name="Shatkay H."/>
            <person name="Dew I."/>
            <person name="Miller J.R."/>
            <person name="Flanigan M.J."/>
            <person name="Edwards N.J."/>
            <person name="Bolanos R."/>
            <person name="Fasulo D."/>
            <person name="Halldorsson B.V."/>
            <person name="Hannenhalli S."/>
            <person name="Turner R."/>
            <person name="Yooseph S."/>
            <person name="Lu F."/>
            <person name="Nusskern D.R."/>
            <person name="Shue B.C."/>
            <person name="Zheng X.H."/>
            <person name="Zhong F."/>
            <person name="Delcher A.L."/>
            <person name="Huson D.H."/>
            <person name="Kravitz S.A."/>
            <person name="Mouchard L."/>
            <person name="Reinert K."/>
            <person name="Remington K.A."/>
            <person name="Clark A.G."/>
            <person name="Waterman M.S."/>
            <person name="Eichler E.E."/>
            <person name="Adams M.D."/>
            <person name="Hunkapiller M.W."/>
            <person name="Myers E.W."/>
            <person name="Venter J.C."/>
        </authorList>
    </citation>
    <scope>NUCLEOTIDE SEQUENCE [LARGE SCALE GENOMIC DNA]</scope>
</reference>
<reference key="5">
    <citation type="journal article" date="2004" name="Genome Res.">
        <title>The status, quality, and expansion of the NIH full-length cDNA project: the Mammalian Gene Collection (MGC).</title>
        <authorList>
            <consortium name="The MGC Project Team"/>
        </authorList>
    </citation>
    <scope>NUCLEOTIDE SEQUENCE [LARGE SCALE MRNA] OF 23-221 (ISOFORM 1)</scope>
    <scope>VARIANT GLU-196</scope>
    <source>
        <tissue>Lung</tissue>
    </source>
</reference>
<reference key="6">
    <citation type="submission" date="2001-12" db="EMBL/GenBank/DDBJ databases">
        <authorList>
            <person name="Hui R."/>
            <person name="Teng S."/>
            <person name="Lin C."/>
            <person name="Ma L."/>
            <person name="Zhen Y."/>
        </authorList>
    </citation>
    <scope>NUCLEOTIDE SEQUENCE [MRNA] OF 25-221 (ISOFORM 1)</scope>
    <scope>VARIANT GLU-196</scope>
    <source>
        <tissue>Heart</tissue>
        <tissue>Kidney</tissue>
    </source>
</reference>
<reference key="7">
    <citation type="journal article" date="2002" name="J. Physiol. (Lond.)">
        <title>KCNE4 is an inhibitory subunit to the KCNQ1 channel.</title>
        <authorList>
            <person name="Grunnet M."/>
            <person name="Jespersen T."/>
            <person name="Rasmussen H.B."/>
            <person name="Ljungstroem T."/>
            <person name="Jorgensen N.K."/>
            <person name="Olesen S.-P."/>
            <person name="Klaerke D.A."/>
        </authorList>
    </citation>
    <scope>FUNCTION</scope>
    <scope>INTERACTION WITH KCNQ1</scope>
    <scope>TISSUE SPECIFICITY</scope>
</reference>
<reference key="8">
    <citation type="journal article" date="2009" name="J. Gen. Physiol.">
        <title>Distinct subdomains of the KCNQ1 S6 segment determine channel modulation by different KCNE subunits.</title>
        <authorList>
            <person name="Vanoye C.G."/>
            <person name="Welch R.C."/>
            <person name="Daniels M.A."/>
            <person name="Manderfield L.J."/>
            <person name="Tapper A.R."/>
            <person name="Sanders C.R."/>
            <person name="George A.L. Jr."/>
        </authorList>
    </citation>
    <scope>FUNCTION</scope>
    <scope>INTERACTION WITH KCNQ1</scope>
</reference>
<reference key="9">
    <citation type="journal article" date="2010" name="J. Cell. Physiol.">
        <title>Impact of KCNE subunits on KCNQ1 (Kv7.1) channel membrane surface targeting.</title>
        <authorList>
            <person name="Roura-Ferrer M."/>
            <person name="Sole L."/>
            <person name="Oliveras A."/>
            <person name="Dahan R."/>
            <person name="Bielanska J."/>
            <person name="Villarroel A."/>
            <person name="Comes N."/>
            <person name="Felipe A."/>
        </authorList>
    </citation>
    <scope>FUNCTION</scope>
    <scope>INTERACTION WITH KCNQ1</scope>
</reference>
<reference key="10">
    <citation type="journal article" date="2016" name="FASEB J.">
        <title>Novel exon 1 protein-coding regions N-terminally extend human KCNE3 and KCNE4.</title>
        <authorList>
            <person name="Abbott G.W."/>
        </authorList>
    </citation>
    <scope>FUNCTION (ISOFORMS 1 AND 2)</scope>
    <scope>TISSUE SPECIFICITY (ISOFORM 1)</scope>
    <scope>ALTERNATIVE SPLICING (ISOFORMS 1 AND 2)</scope>
    <scope>SUBCELLULAR LOCATION</scope>
</reference>
<gene>
    <name evidence="14" type="primary">KCNE4</name>
</gene>
<feature type="chain" id="PRO_0000144292" description="Potassium voltage-gated channel subfamily E member 4">
    <location>
        <begin position="1"/>
        <end position="221"/>
    </location>
</feature>
<feature type="topological domain" description="Extracellular" evidence="2">
    <location>
        <begin position="1"/>
        <end position="86"/>
    </location>
</feature>
<feature type="transmembrane region" description="Helical" evidence="2">
    <location>
        <begin position="87"/>
        <end position="107"/>
    </location>
</feature>
<feature type="topological domain" description="Cytoplasmic" evidence="2">
    <location>
        <begin position="108"/>
        <end position="221"/>
    </location>
</feature>
<feature type="region of interest" description="Disordered" evidence="3">
    <location>
        <begin position="58"/>
        <end position="77"/>
    </location>
</feature>
<feature type="region of interest" description="Disordered" evidence="3">
    <location>
        <begin position="175"/>
        <end position="221"/>
    </location>
</feature>
<feature type="compositionally biased region" description="Polar residues" evidence="3">
    <location>
        <begin position="58"/>
        <end position="72"/>
    </location>
</feature>
<feature type="compositionally biased region" description="Acidic residues" evidence="3">
    <location>
        <begin position="192"/>
        <end position="202"/>
    </location>
</feature>
<feature type="compositionally biased region" description="Polar residues" evidence="3">
    <location>
        <begin position="203"/>
        <end position="221"/>
    </location>
</feature>
<feature type="glycosylation site" description="N-linked (GlcNAc...) asparagine" evidence="2">
    <location>
        <position position="9"/>
    </location>
</feature>
<feature type="splice variant" id="VSP_062167" description="In isoform 2.">
    <location>
        <begin position="1"/>
        <end position="51"/>
    </location>
</feature>
<feature type="sequence variant" id="VAR_030620" description="In dbSNP:rs13409084.">
    <original>G</original>
    <variation>S</variation>
    <location>
        <position position="98"/>
    </location>
</feature>
<feature type="sequence variant" id="VAR_024411" description="In dbSNP:rs12621643." evidence="5 9">
    <original>D</original>
    <variation>E</variation>
    <location>
        <position position="196"/>
    </location>
</feature>
<feature type="sequence conflict" description="In Ref. 2; BAH11761." evidence="12" ref="2">
    <original>V</original>
    <variation>A</variation>
    <location>
        <position position="47"/>
    </location>
</feature>
<feature type="sequence conflict" description="In Ref. 6; AAL49979." evidence="12" ref="6">
    <original>M</original>
    <variation>V</variation>
    <location>
        <position position="105"/>
    </location>
</feature>
<feature type="sequence conflict" description="In Ref. 6; AAL49979." evidence="12" ref="6">
    <original>P</original>
    <variation>S</variation>
    <location>
        <position position="137"/>
    </location>
</feature>
<organism>
    <name type="scientific">Homo sapiens</name>
    <name type="common">Human</name>
    <dbReference type="NCBI Taxonomy" id="9606"/>
    <lineage>
        <taxon>Eukaryota</taxon>
        <taxon>Metazoa</taxon>
        <taxon>Chordata</taxon>
        <taxon>Craniata</taxon>
        <taxon>Vertebrata</taxon>
        <taxon>Euteleostomi</taxon>
        <taxon>Mammalia</taxon>
        <taxon>Eutheria</taxon>
        <taxon>Euarchontoglires</taxon>
        <taxon>Primates</taxon>
        <taxon>Haplorrhini</taxon>
        <taxon>Catarrhini</taxon>
        <taxon>Hominidae</taxon>
        <taxon>Homo</taxon>
    </lineage>
</organism>
<name>KCNE4_HUMAN</name>